<proteinExistence type="evidence at protein level"/>
<name>1433G_BOVIN</name>
<gene>
    <name evidence="1" type="primary">YWHAG</name>
</gene>
<dbReference type="EMBL" id="AF043737">
    <property type="protein sequence ID" value="AAC02091.1"/>
    <property type="molecule type" value="mRNA"/>
</dbReference>
<dbReference type="PIR" id="S13610">
    <property type="entry name" value="S13610"/>
</dbReference>
<dbReference type="SMR" id="P68252"/>
<dbReference type="FunCoup" id="P68252">
    <property type="interactions" value="8"/>
</dbReference>
<dbReference type="STRING" id="9913.ENSBTAP00000005327"/>
<dbReference type="PaxDb" id="9913-ENSBTAP00000005327"/>
<dbReference type="PeptideAtlas" id="P68252"/>
<dbReference type="eggNOG" id="KOG0841">
    <property type="taxonomic scope" value="Eukaryota"/>
</dbReference>
<dbReference type="InParanoid" id="P68252"/>
<dbReference type="OrthoDB" id="10260625at2759"/>
<dbReference type="Proteomes" id="UP000009136">
    <property type="component" value="Unplaced"/>
</dbReference>
<dbReference type="GO" id="GO:0005737">
    <property type="term" value="C:cytoplasm"/>
    <property type="evidence" value="ECO:0000250"/>
    <property type="project" value="UniProtKB"/>
</dbReference>
<dbReference type="GO" id="GO:0005829">
    <property type="term" value="C:cytosol"/>
    <property type="evidence" value="ECO:0007669"/>
    <property type="project" value="UniProtKB-SubCell"/>
</dbReference>
<dbReference type="GO" id="GO:0005759">
    <property type="term" value="C:mitochondrial matrix"/>
    <property type="evidence" value="ECO:0007669"/>
    <property type="project" value="UniProtKB-SubCell"/>
</dbReference>
<dbReference type="GO" id="GO:0005159">
    <property type="term" value="F:insulin-like growth factor receptor binding"/>
    <property type="evidence" value="ECO:0000250"/>
    <property type="project" value="UniProtKB"/>
</dbReference>
<dbReference type="GO" id="GO:0140031">
    <property type="term" value="F:phosphorylation-dependent protein binding"/>
    <property type="evidence" value="ECO:0000250"/>
    <property type="project" value="UniProtKB"/>
</dbReference>
<dbReference type="GO" id="GO:0019904">
    <property type="term" value="F:protein domain specific binding"/>
    <property type="evidence" value="ECO:0000250"/>
    <property type="project" value="AgBase"/>
</dbReference>
<dbReference type="GO" id="GO:0005080">
    <property type="term" value="F:protein kinase C binding"/>
    <property type="evidence" value="ECO:0000318"/>
    <property type="project" value="GO_Central"/>
</dbReference>
<dbReference type="GO" id="GO:0140311">
    <property type="term" value="F:protein sequestering activity"/>
    <property type="evidence" value="ECO:0000250"/>
    <property type="project" value="UniProtKB"/>
</dbReference>
<dbReference type="GO" id="GO:0022409">
    <property type="term" value="P:positive regulation of cell-cell adhesion"/>
    <property type="evidence" value="ECO:0000250"/>
    <property type="project" value="UniProtKB"/>
</dbReference>
<dbReference type="GO" id="GO:0008104">
    <property type="term" value="P:protein localization"/>
    <property type="evidence" value="ECO:0000318"/>
    <property type="project" value="GO_Central"/>
</dbReference>
<dbReference type="GO" id="GO:0045664">
    <property type="term" value="P:regulation of neuron differentiation"/>
    <property type="evidence" value="ECO:0000250"/>
    <property type="project" value="UniProtKB"/>
</dbReference>
<dbReference type="GO" id="GO:0032880">
    <property type="term" value="P:regulation of protein localization"/>
    <property type="evidence" value="ECO:0000250"/>
    <property type="project" value="UniProtKB"/>
</dbReference>
<dbReference type="GO" id="GO:0048167">
    <property type="term" value="P:regulation of synaptic plasticity"/>
    <property type="evidence" value="ECO:0000250"/>
    <property type="project" value="UniProtKB"/>
</dbReference>
<dbReference type="GO" id="GO:0007165">
    <property type="term" value="P:signal transduction"/>
    <property type="evidence" value="ECO:0000318"/>
    <property type="project" value="GO_Central"/>
</dbReference>
<dbReference type="CDD" id="cd10024">
    <property type="entry name" value="14-3-3_gamma"/>
    <property type="match status" value="1"/>
</dbReference>
<dbReference type="FunFam" id="1.20.190.20:FF:000001">
    <property type="entry name" value="14-3-3 gamma 1"/>
    <property type="match status" value="1"/>
</dbReference>
<dbReference type="Gene3D" id="1.20.190.20">
    <property type="entry name" value="14-3-3 domain"/>
    <property type="match status" value="1"/>
</dbReference>
<dbReference type="InterPro" id="IPR000308">
    <property type="entry name" value="14-3-3"/>
</dbReference>
<dbReference type="InterPro" id="IPR023409">
    <property type="entry name" value="14-3-3_CS"/>
</dbReference>
<dbReference type="InterPro" id="IPR036815">
    <property type="entry name" value="14-3-3_dom_sf"/>
</dbReference>
<dbReference type="InterPro" id="IPR023410">
    <property type="entry name" value="14-3-3_domain"/>
</dbReference>
<dbReference type="PANTHER" id="PTHR18860">
    <property type="entry name" value="14-3-3 PROTEIN"/>
    <property type="match status" value="1"/>
</dbReference>
<dbReference type="Pfam" id="PF00244">
    <property type="entry name" value="14-3-3"/>
    <property type="match status" value="1"/>
</dbReference>
<dbReference type="PIRSF" id="PIRSF000868">
    <property type="entry name" value="14-3-3"/>
    <property type="match status" value="1"/>
</dbReference>
<dbReference type="PRINTS" id="PR00305">
    <property type="entry name" value="1433ZETA"/>
</dbReference>
<dbReference type="SMART" id="SM00101">
    <property type="entry name" value="14_3_3"/>
    <property type="match status" value="1"/>
</dbReference>
<dbReference type="SUPFAM" id="SSF48445">
    <property type="entry name" value="14-3-3 protein"/>
    <property type="match status" value="1"/>
</dbReference>
<dbReference type="PROSITE" id="PS00796">
    <property type="entry name" value="1433_1"/>
    <property type="match status" value="1"/>
</dbReference>
<dbReference type="PROSITE" id="PS00797">
    <property type="entry name" value="1433_2"/>
    <property type="match status" value="1"/>
</dbReference>
<evidence type="ECO:0000250" key="1">
    <source>
        <dbReference type="UniProtKB" id="P61981"/>
    </source>
</evidence>
<evidence type="ECO:0000250" key="2">
    <source>
        <dbReference type="UniProtKB" id="P61982"/>
    </source>
</evidence>
<evidence type="ECO:0000250" key="3">
    <source>
        <dbReference type="UniProtKB" id="P61983"/>
    </source>
</evidence>
<evidence type="ECO:0000269" key="4">
    <source>
    </source>
</evidence>
<evidence type="ECO:0000305" key="5"/>
<evidence type="ECO:0000305" key="6">
    <source>
    </source>
</evidence>
<comment type="function">
    <text evidence="1 4">Adapter protein implicated in the regulation of a large spectrum of both general and specialized signaling pathways (PubMed:7931346). Binds to a large number of partners, usually by recognition of a phosphoserine or phosphothreonine motif (PubMed:7931346). Binding generally results in the modulation of the activity of the binding partner (PubMed:7931346). Promotes inactivation of WDR24 component of the GATOR2 complex by binding to phosphorylated WDR24 (By similarity). Participates in the positive regulation of NMDA glutamate receptor activity by promoting the L-glutamate secretion through interaction with BEST1 (By similarity). Reduces keratinocyte intercellular adhesion, via interacting with PKP1 and sequestering it in the cytoplasm, thereby reducing its incorporation into desmosomes. Plays a role in mitochondrial protein catabolic process (also named MALM) that promotes the degradation of damaged proteins inside mitochondria (By similarity).</text>
</comment>
<comment type="subunit">
    <text evidence="1 2 3">Homodimer (By similarity). Part of a complex that contains DSG3, PKP1, YAP1 and YWHAG; the complex is required for localization of DSG3 and YAP1 to the cell membrane in keratinocytes (By similarity). Interacts with SAMSN1 (By similarity). Interacts with RAF1, SSH1 and CRTC2/TORC2 (By similarity). Interacts with ABL1 (phosphorylated form); the interaction retains it in the cytoplasm (By similarity). Interacts with GAB2 (By similarity). Interacts with MDM4 (phosphorylated); negatively regulates MDM4 activity toward TP53 (By similarity). Interacts with PKA-phosphorylated AANAT and SIRT2 (By similarity). Interacts with the 'Thr-369' phosphorylated form of DAPK2 (By similarity). Interacts with PI4KB, TBC1D22A and TBC1D22B (By similarity). Interacts with SLITRK1 (By similarity). Interacts with LRRK2; this interaction is dependent on LRRK2 phosphorylation (By similarity). Interacts with MARK2 and MARK3 (By similarity). Interacts with MEFV (By similarity). Interacts with ENDOG, TSC2 and PIK3C3; interaction with ENDOG weakens its interaction with TSC2 and PIK3C3 (By similarity). Interacts with (phosphorylated) WDR24 (By similarity). Interacts with BEST1; this interaction promotes L-glutamate channel activity leading to the positive regulation of NMDA glutamate receptor activity through the L-glutamate secretion (By similarity). Interacts with PKP1 (when phosphorylated); the interaction results in translocation of PKP1 to the cytoplasm and loss of intercellular adhesion in keratinocytes (By similarity). Interacts with SPATA18/MIEAP; a protein that also plays a role in MALM (By similarity).</text>
</comment>
<comment type="subcellular location">
    <subcellularLocation>
        <location evidence="6">Cytoplasm</location>
        <location evidence="6">Cytosol</location>
    </subcellularLocation>
    <subcellularLocation>
        <location evidence="1">Mitochondrion matrix</location>
    </subcellularLocation>
    <text evidence="1">Translocates to the mitochondrial matrix following induction of MALM (mitochondrial protein catabolic process).</text>
</comment>
<comment type="PTM">
    <text evidence="1">Phosphorylated by various PKC isozymes.</text>
</comment>
<comment type="similarity">
    <text evidence="5">Belongs to the 14-3-3 family.</text>
</comment>
<feature type="chain" id="PRO_0000058605" description="14-3-3 protein gamma">
    <location>
        <begin position="1"/>
        <end position="247"/>
    </location>
</feature>
<feature type="initiator methionine" description="Removed; alternate" evidence="1">
    <location>
        <position position="1"/>
    </location>
</feature>
<feature type="chain" id="PRO_0000367906" description="14-3-3 protein gamma, N-terminally processed">
    <location>
        <begin position="2"/>
        <end position="247"/>
    </location>
</feature>
<feature type="region of interest" description="Interaction with SPATA18/MIEAP" evidence="1">
    <location>
        <begin position="2"/>
        <end position="247"/>
    </location>
</feature>
<feature type="site" description="Interaction with phosphoserine on interacting protein" evidence="1">
    <location>
        <position position="57"/>
    </location>
</feature>
<feature type="site" description="Interaction with phosphoserine on interacting protein" evidence="1">
    <location>
        <position position="132"/>
    </location>
</feature>
<feature type="modified residue" description="N-acetylmethionine" evidence="1">
    <location>
        <position position="1"/>
    </location>
</feature>
<feature type="modified residue" description="N-acetylvaline; in 14-3-3 protein gamma, N-terminally processed" evidence="1">
    <location>
        <position position="2"/>
    </location>
</feature>
<feature type="modified residue" description="Phosphoserine" evidence="1">
    <location>
        <position position="71"/>
    </location>
</feature>
<feature type="modified residue" description="Phosphotyrosine" evidence="3">
    <location>
        <position position="133"/>
    </location>
</feature>
<feature type="modified residue" description="Phosphothreonine" evidence="1">
    <location>
        <position position="145"/>
    </location>
</feature>
<feature type="modified residue" description="Phosphoserine" evidence="3">
    <location>
        <position position="215"/>
    </location>
</feature>
<feature type="modified residue" description="Phosphothreonine" evidence="1">
    <location>
        <position position="234"/>
    </location>
</feature>
<feature type="modified residue" description="Phosphoserine" evidence="1">
    <location>
        <position position="235"/>
    </location>
</feature>
<keyword id="KW-0007">Acetylation</keyword>
<keyword id="KW-0963">Cytoplasm</keyword>
<keyword id="KW-0903">Direct protein sequencing</keyword>
<keyword id="KW-0496">Mitochondrion</keyword>
<keyword id="KW-0597">Phosphoprotein</keyword>
<keyword id="KW-1185">Reference proteome</keyword>
<accession>P68252</accession>
<accession>P29359</accession>
<sequence>MVDREQLVQKARLAEQAERYDDMAAAMKNVTELNEPLSNEERNLLSVAYKNVVGARRSSWRVISSIEQKTSADGNEKKIEMVRAYREKIEKELEAVCQDVLSLLDNYLIKNCSETQIESKVFYLKMKGDYYRYLAEVATGEKRATVVESSEKAYSEAHEISKEHMQPTHPIRLGLALNYSVFYYEIQNAPEQACHLAKTAFDDAIAELDTLNEDSYKDSTLIMQLLRDNLTLWTSDQQDDDGGEGNN</sequence>
<reference key="1">
    <citation type="submission" date="1998-01" db="EMBL/GenBank/DDBJ databases">
        <title>Expression of 14-3-3 proteins in bovine retinal photoreceptors.</title>
        <authorList>
            <person name="Jones J.M."/>
            <person name="Niikura T."/>
            <person name="Pinke R.M."/>
            <person name="Guo W."/>
            <person name="Molday L."/>
            <person name="Leykam J."/>
            <person name="McConnell D.G."/>
        </authorList>
    </citation>
    <scope>NUCLEOTIDE SEQUENCE [MRNA]</scope>
</reference>
<reference key="2">
    <citation type="journal article" date="1991" name="J. Mol. Biol.">
        <title>Distinct forms of the protein kinase-dependent activator of tyrosine and tryptophan hydroxylases.</title>
        <authorList>
            <person name="Isobe T."/>
            <person name="Ichimura T."/>
            <person name="Sunaya T."/>
            <person name="Okuyama T."/>
            <person name="Takahashi N."/>
            <person name="Kuwano R."/>
            <person name="Takahashi Y."/>
        </authorList>
    </citation>
    <scope>PROTEIN SEQUENCE OF 2-246</scope>
</reference>
<reference key="3">
    <citation type="journal article" date="1994" name="J. Neurochem.">
        <title>Activation of protein kinase C by purified bovine brain 14-3-3: comparison with tyrosine hydroxylase activation.</title>
        <authorList>
            <person name="Tanji M."/>
            <person name="Horwitz R."/>
            <person name="Rosenfeld G."/>
            <person name="Waymire J.C."/>
        </authorList>
    </citation>
    <scope>FUNCTION</scope>
    <scope>SUBCELLULAR LOCATION</scope>
</reference>
<protein>
    <recommendedName>
        <fullName evidence="1">14-3-3 protein gamma</fullName>
    </recommendedName>
    <alternativeName>
        <fullName>Protein kinase C inhibitor protein 1</fullName>
        <shortName>KCIP-1</shortName>
    </alternativeName>
    <component>
        <recommendedName>
            <fullName>14-3-3 protein gamma, N-terminally processed</fullName>
        </recommendedName>
    </component>
</protein>
<organism>
    <name type="scientific">Bos taurus</name>
    <name type="common">Bovine</name>
    <dbReference type="NCBI Taxonomy" id="9913"/>
    <lineage>
        <taxon>Eukaryota</taxon>
        <taxon>Metazoa</taxon>
        <taxon>Chordata</taxon>
        <taxon>Craniata</taxon>
        <taxon>Vertebrata</taxon>
        <taxon>Euteleostomi</taxon>
        <taxon>Mammalia</taxon>
        <taxon>Eutheria</taxon>
        <taxon>Laurasiatheria</taxon>
        <taxon>Artiodactyla</taxon>
        <taxon>Ruminantia</taxon>
        <taxon>Pecora</taxon>
        <taxon>Bovidae</taxon>
        <taxon>Bovinae</taxon>
        <taxon>Bos</taxon>
    </lineage>
</organism>